<evidence type="ECO:0000255" key="1">
    <source>
        <dbReference type="HAMAP-Rule" id="MF_00182"/>
    </source>
</evidence>
<protein>
    <recommendedName>
        <fullName evidence="1">Methionyl-tRNA formyltransferase</fullName>
        <ecNumber evidence="1">2.1.2.9</ecNumber>
    </recommendedName>
</protein>
<organism>
    <name type="scientific">Vibrio atlanticus (strain LGP32)</name>
    <name type="common">Vibrio splendidus (strain Mel32)</name>
    <dbReference type="NCBI Taxonomy" id="575788"/>
    <lineage>
        <taxon>Bacteria</taxon>
        <taxon>Pseudomonadati</taxon>
        <taxon>Pseudomonadota</taxon>
        <taxon>Gammaproteobacteria</taxon>
        <taxon>Vibrionales</taxon>
        <taxon>Vibrionaceae</taxon>
        <taxon>Vibrio</taxon>
    </lineage>
</organism>
<keyword id="KW-0648">Protein biosynthesis</keyword>
<keyword id="KW-0808">Transferase</keyword>
<feature type="chain" id="PRO_1000190051" description="Methionyl-tRNA formyltransferase">
    <location>
        <begin position="1"/>
        <end position="321"/>
    </location>
</feature>
<feature type="binding site" evidence="1">
    <location>
        <begin position="113"/>
        <end position="116"/>
    </location>
    <ligand>
        <name>(6S)-5,6,7,8-tetrahydrofolate</name>
        <dbReference type="ChEBI" id="CHEBI:57453"/>
    </ligand>
</feature>
<gene>
    <name evidence="1" type="primary">fmt</name>
    <name type="ordered locus">VS_3127</name>
</gene>
<sequence length="321" mass="34832">MSQSLRIVFAGTPDFAARHLAALLSSEHEVIAVYTQPDRPAGRGKKLTASPVKNIALENNIPVYQPENFKSDEAKQELANLNADIMVVVAYGLLLPQAVLDTPRLGCINVHGSILPRWRGAAPIQRSIWAGDKETGVTIMQMDIGLDTGDMLSIATLPIESTDTSASMYEKLAGLGPDALVECLADIASGKAVAEKQDDELANYAKKLSKEEAKIDWNDSAEHIERCVRAFNPWPMSHFAIVDSSSNDEKSIKVWQTRVDEESTSAPAGSIIKADKTGIYVATGDKVLVLEQLQVPGKKAMSVQDILNSRASWFEVGTQLS</sequence>
<proteinExistence type="inferred from homology"/>
<dbReference type="EC" id="2.1.2.9" evidence="1"/>
<dbReference type="EMBL" id="FM954972">
    <property type="protein sequence ID" value="CAV20380.1"/>
    <property type="molecule type" value="Genomic_DNA"/>
</dbReference>
<dbReference type="SMR" id="B7VMX2"/>
<dbReference type="STRING" id="575788.VS_3127"/>
<dbReference type="KEGG" id="vsp:VS_3127"/>
<dbReference type="PATRIC" id="fig|575788.5.peg.4290"/>
<dbReference type="eggNOG" id="COG0223">
    <property type="taxonomic scope" value="Bacteria"/>
</dbReference>
<dbReference type="HOGENOM" id="CLU_033347_1_2_6"/>
<dbReference type="Proteomes" id="UP000009100">
    <property type="component" value="Chromosome 1"/>
</dbReference>
<dbReference type="GO" id="GO:0005829">
    <property type="term" value="C:cytosol"/>
    <property type="evidence" value="ECO:0007669"/>
    <property type="project" value="TreeGrafter"/>
</dbReference>
<dbReference type="GO" id="GO:0004479">
    <property type="term" value="F:methionyl-tRNA formyltransferase activity"/>
    <property type="evidence" value="ECO:0007669"/>
    <property type="project" value="UniProtKB-UniRule"/>
</dbReference>
<dbReference type="CDD" id="cd08646">
    <property type="entry name" value="FMT_core_Met-tRNA-FMT_N"/>
    <property type="match status" value="1"/>
</dbReference>
<dbReference type="CDD" id="cd08704">
    <property type="entry name" value="Met_tRNA_FMT_C"/>
    <property type="match status" value="1"/>
</dbReference>
<dbReference type="FunFam" id="3.40.50.170:FF:000003">
    <property type="entry name" value="Methionyl-tRNA formyltransferase"/>
    <property type="match status" value="1"/>
</dbReference>
<dbReference type="Gene3D" id="3.10.25.10">
    <property type="entry name" value="Formyl transferase, C-terminal domain"/>
    <property type="match status" value="1"/>
</dbReference>
<dbReference type="Gene3D" id="3.40.50.170">
    <property type="entry name" value="Formyl transferase, N-terminal domain"/>
    <property type="match status" value="1"/>
</dbReference>
<dbReference type="HAMAP" id="MF_00182">
    <property type="entry name" value="Formyl_trans"/>
    <property type="match status" value="1"/>
</dbReference>
<dbReference type="InterPro" id="IPR005794">
    <property type="entry name" value="Fmt"/>
</dbReference>
<dbReference type="InterPro" id="IPR005793">
    <property type="entry name" value="Formyl_trans_C"/>
</dbReference>
<dbReference type="InterPro" id="IPR037022">
    <property type="entry name" value="Formyl_trans_C_sf"/>
</dbReference>
<dbReference type="InterPro" id="IPR002376">
    <property type="entry name" value="Formyl_transf_N"/>
</dbReference>
<dbReference type="InterPro" id="IPR036477">
    <property type="entry name" value="Formyl_transf_N_sf"/>
</dbReference>
<dbReference type="InterPro" id="IPR011034">
    <property type="entry name" value="Formyl_transferase-like_C_sf"/>
</dbReference>
<dbReference type="InterPro" id="IPR001555">
    <property type="entry name" value="GART_AS"/>
</dbReference>
<dbReference type="InterPro" id="IPR044135">
    <property type="entry name" value="Met-tRNA-FMT_C"/>
</dbReference>
<dbReference type="InterPro" id="IPR041711">
    <property type="entry name" value="Met-tRNA-FMT_N"/>
</dbReference>
<dbReference type="NCBIfam" id="TIGR00460">
    <property type="entry name" value="fmt"/>
    <property type="match status" value="1"/>
</dbReference>
<dbReference type="PANTHER" id="PTHR11138">
    <property type="entry name" value="METHIONYL-TRNA FORMYLTRANSFERASE"/>
    <property type="match status" value="1"/>
</dbReference>
<dbReference type="PANTHER" id="PTHR11138:SF5">
    <property type="entry name" value="METHIONYL-TRNA FORMYLTRANSFERASE, MITOCHONDRIAL"/>
    <property type="match status" value="1"/>
</dbReference>
<dbReference type="Pfam" id="PF02911">
    <property type="entry name" value="Formyl_trans_C"/>
    <property type="match status" value="1"/>
</dbReference>
<dbReference type="Pfam" id="PF00551">
    <property type="entry name" value="Formyl_trans_N"/>
    <property type="match status" value="1"/>
</dbReference>
<dbReference type="SUPFAM" id="SSF50486">
    <property type="entry name" value="FMT C-terminal domain-like"/>
    <property type="match status" value="1"/>
</dbReference>
<dbReference type="SUPFAM" id="SSF53328">
    <property type="entry name" value="Formyltransferase"/>
    <property type="match status" value="1"/>
</dbReference>
<dbReference type="PROSITE" id="PS00373">
    <property type="entry name" value="GART"/>
    <property type="match status" value="1"/>
</dbReference>
<name>FMT_VIBA3</name>
<accession>B7VMX2</accession>
<comment type="function">
    <text evidence="1">Attaches a formyl group to the free amino group of methionyl-tRNA(fMet). The formyl group appears to play a dual role in the initiator identity of N-formylmethionyl-tRNA by promoting its recognition by IF2 and preventing the misappropriation of this tRNA by the elongation apparatus.</text>
</comment>
<comment type="catalytic activity">
    <reaction evidence="1">
        <text>L-methionyl-tRNA(fMet) + (6R)-10-formyltetrahydrofolate = N-formyl-L-methionyl-tRNA(fMet) + (6S)-5,6,7,8-tetrahydrofolate + H(+)</text>
        <dbReference type="Rhea" id="RHEA:24380"/>
        <dbReference type="Rhea" id="RHEA-COMP:9952"/>
        <dbReference type="Rhea" id="RHEA-COMP:9953"/>
        <dbReference type="ChEBI" id="CHEBI:15378"/>
        <dbReference type="ChEBI" id="CHEBI:57453"/>
        <dbReference type="ChEBI" id="CHEBI:78530"/>
        <dbReference type="ChEBI" id="CHEBI:78844"/>
        <dbReference type="ChEBI" id="CHEBI:195366"/>
        <dbReference type="EC" id="2.1.2.9"/>
    </reaction>
</comment>
<comment type="similarity">
    <text evidence="1">Belongs to the Fmt family.</text>
</comment>
<reference key="1">
    <citation type="submission" date="2009-02" db="EMBL/GenBank/DDBJ databases">
        <title>Vibrio splendidus str. LGP32 complete genome.</title>
        <authorList>
            <person name="Mazel D."/>
            <person name="Le Roux F."/>
        </authorList>
    </citation>
    <scope>NUCLEOTIDE SEQUENCE [LARGE SCALE GENOMIC DNA]</scope>
    <source>
        <strain>LGP32</strain>
    </source>
</reference>